<proteinExistence type="evidence at protein level"/>
<accession>Q99N92</accession>
<name>RM27_MOUSE</name>
<dbReference type="EMBL" id="AB049648">
    <property type="protein sequence ID" value="BAB40853.1"/>
    <property type="molecule type" value="mRNA"/>
</dbReference>
<dbReference type="EMBL" id="BC030074">
    <property type="protein sequence ID" value="AAH30074.1"/>
    <property type="molecule type" value="mRNA"/>
</dbReference>
<dbReference type="CCDS" id="CCDS25263.1"/>
<dbReference type="RefSeq" id="NP_444391.1">
    <property type="nucleotide sequence ID" value="NM_053161.2"/>
</dbReference>
<dbReference type="SMR" id="Q99N92"/>
<dbReference type="BioGRID" id="220436">
    <property type="interactions" value="11"/>
</dbReference>
<dbReference type="ComplexPortal" id="CPX-5302">
    <property type="entry name" value="39S mitochondrial large ribosomal subunit"/>
</dbReference>
<dbReference type="FunCoup" id="Q99N92">
    <property type="interactions" value="954"/>
</dbReference>
<dbReference type="STRING" id="10090.ENSMUSP00000025278"/>
<dbReference type="iPTMnet" id="Q99N92"/>
<dbReference type="PhosphoSitePlus" id="Q99N92"/>
<dbReference type="jPOST" id="Q99N92"/>
<dbReference type="PaxDb" id="10090-ENSMUSP00000025278"/>
<dbReference type="PeptideAtlas" id="Q99N92"/>
<dbReference type="ProteomicsDB" id="300399"/>
<dbReference type="Pumba" id="Q99N92"/>
<dbReference type="Antibodypedia" id="18064">
    <property type="antibodies" value="81 antibodies from 20 providers"/>
</dbReference>
<dbReference type="DNASU" id="94064"/>
<dbReference type="Ensembl" id="ENSMUST00000025278.8">
    <property type="protein sequence ID" value="ENSMUSP00000025278.8"/>
    <property type="gene ID" value="ENSMUSG00000024414.14"/>
</dbReference>
<dbReference type="GeneID" id="94064"/>
<dbReference type="KEGG" id="mmu:94064"/>
<dbReference type="UCSC" id="uc007kzg.1">
    <property type="organism name" value="mouse"/>
</dbReference>
<dbReference type="AGR" id="MGI:2137224"/>
<dbReference type="CTD" id="51264"/>
<dbReference type="MGI" id="MGI:2137224">
    <property type="gene designation" value="Mrpl27"/>
</dbReference>
<dbReference type="VEuPathDB" id="HostDB:ENSMUSG00000024414"/>
<dbReference type="eggNOG" id="KOG4600">
    <property type="taxonomic scope" value="Eukaryota"/>
</dbReference>
<dbReference type="GeneTree" id="ENSGT00390000014660"/>
<dbReference type="HOGENOM" id="CLU_143748_0_0_1"/>
<dbReference type="InParanoid" id="Q99N92"/>
<dbReference type="OMA" id="NWDHTWV"/>
<dbReference type="OrthoDB" id="1867012at2759"/>
<dbReference type="PhylomeDB" id="Q99N92"/>
<dbReference type="TreeFam" id="TF323523"/>
<dbReference type="Reactome" id="R-MMU-5389840">
    <property type="pathway name" value="Mitochondrial translation elongation"/>
</dbReference>
<dbReference type="Reactome" id="R-MMU-5419276">
    <property type="pathway name" value="Mitochondrial translation termination"/>
</dbReference>
<dbReference type="BioGRID-ORCS" id="94064">
    <property type="hits" value="24 hits in 113 CRISPR screens"/>
</dbReference>
<dbReference type="ChiTaRS" id="Mrpl27">
    <property type="organism name" value="mouse"/>
</dbReference>
<dbReference type="PRO" id="PR:Q99N92"/>
<dbReference type="Proteomes" id="UP000000589">
    <property type="component" value="Chromosome 11"/>
</dbReference>
<dbReference type="RNAct" id="Q99N92">
    <property type="molecule type" value="protein"/>
</dbReference>
<dbReference type="Bgee" id="ENSMUSG00000024414">
    <property type="expression patterns" value="Expressed in proximal tubule and 68 other cell types or tissues"/>
</dbReference>
<dbReference type="GO" id="GO:0005743">
    <property type="term" value="C:mitochondrial inner membrane"/>
    <property type="evidence" value="ECO:0000303"/>
    <property type="project" value="ComplexPortal"/>
</dbReference>
<dbReference type="GO" id="GO:0005762">
    <property type="term" value="C:mitochondrial large ribosomal subunit"/>
    <property type="evidence" value="ECO:0000250"/>
    <property type="project" value="UniProtKB"/>
</dbReference>
<dbReference type="GO" id="GO:0005739">
    <property type="term" value="C:mitochondrion"/>
    <property type="evidence" value="ECO:0007005"/>
    <property type="project" value="MGI"/>
</dbReference>
<dbReference type="GO" id="GO:0003735">
    <property type="term" value="F:structural constituent of ribosome"/>
    <property type="evidence" value="ECO:0000266"/>
    <property type="project" value="MGI"/>
</dbReference>
<dbReference type="GO" id="GO:0032543">
    <property type="term" value="P:mitochondrial translation"/>
    <property type="evidence" value="ECO:0000303"/>
    <property type="project" value="ComplexPortal"/>
</dbReference>
<dbReference type="GO" id="GO:0006412">
    <property type="term" value="P:translation"/>
    <property type="evidence" value="ECO:0000266"/>
    <property type="project" value="MGI"/>
</dbReference>
<dbReference type="FunFam" id="2.40.50.100:FF:000031">
    <property type="entry name" value="39S ribosomal protein L27, mitochondrial"/>
    <property type="match status" value="1"/>
</dbReference>
<dbReference type="Gene3D" id="2.40.50.100">
    <property type="match status" value="1"/>
</dbReference>
<dbReference type="InterPro" id="IPR001684">
    <property type="entry name" value="Ribosomal_bL27"/>
</dbReference>
<dbReference type="PANTHER" id="PTHR15893:SF0">
    <property type="entry name" value="LARGE RIBOSOMAL SUBUNIT PROTEIN BL27M"/>
    <property type="match status" value="1"/>
</dbReference>
<dbReference type="PANTHER" id="PTHR15893">
    <property type="entry name" value="RIBOSOMAL PROTEIN L27"/>
    <property type="match status" value="1"/>
</dbReference>
<dbReference type="Pfam" id="PF01016">
    <property type="entry name" value="Ribosomal_L27"/>
    <property type="match status" value="1"/>
</dbReference>
<dbReference type="PRINTS" id="PR00063">
    <property type="entry name" value="RIBOSOMALL27"/>
</dbReference>
<dbReference type="SUPFAM" id="SSF110324">
    <property type="entry name" value="Ribosomal L27 protein-like"/>
    <property type="match status" value="1"/>
</dbReference>
<feature type="transit peptide" description="Mitochondrion" evidence="1">
    <location>
        <begin position="1"/>
        <end position="30"/>
    </location>
</feature>
<feature type="chain" id="PRO_0000181230" description="Large ribosomal subunit protein bL27m">
    <location>
        <begin position="31"/>
        <end position="148"/>
    </location>
</feature>
<feature type="region of interest" description="Disordered" evidence="3">
    <location>
        <begin position="28"/>
        <end position="48"/>
    </location>
</feature>
<evidence type="ECO:0000250" key="1">
    <source>
        <dbReference type="UniProtKB" id="Q32PC3"/>
    </source>
</evidence>
<evidence type="ECO:0000250" key="2">
    <source>
        <dbReference type="UniProtKB" id="Q9P0M9"/>
    </source>
</evidence>
<evidence type="ECO:0000256" key="3">
    <source>
        <dbReference type="SAM" id="MobiDB-lite"/>
    </source>
</evidence>
<evidence type="ECO:0000269" key="4">
    <source>
    </source>
</evidence>
<evidence type="ECO:0000305" key="5"/>
<keyword id="KW-0496">Mitochondrion</keyword>
<keyword id="KW-1185">Reference proteome</keyword>
<keyword id="KW-0687">Ribonucleoprotein</keyword>
<keyword id="KW-0689">Ribosomal protein</keyword>
<keyword id="KW-0809">Transit peptide</keyword>
<organism>
    <name type="scientific">Mus musculus</name>
    <name type="common">Mouse</name>
    <dbReference type="NCBI Taxonomy" id="10090"/>
    <lineage>
        <taxon>Eukaryota</taxon>
        <taxon>Metazoa</taxon>
        <taxon>Chordata</taxon>
        <taxon>Craniata</taxon>
        <taxon>Vertebrata</taxon>
        <taxon>Euteleostomi</taxon>
        <taxon>Mammalia</taxon>
        <taxon>Eutheria</taxon>
        <taxon>Euarchontoglires</taxon>
        <taxon>Glires</taxon>
        <taxon>Rodentia</taxon>
        <taxon>Myomorpha</taxon>
        <taxon>Muroidea</taxon>
        <taxon>Muridae</taxon>
        <taxon>Murinae</taxon>
        <taxon>Mus</taxon>
        <taxon>Mus</taxon>
    </lineage>
</organism>
<sequence length="148" mass="15945">MAAAALTLRTRAAVTALLSPTAPTALAVRHASKKTGGSSKNLGGKSRGKHYGIKKMEGHYVHAGNILGTQRQFRWHPGAHVGLGRNKCLYALEEGIVRYTKDVYVPNPKNTEAVDLVTSLPKGAVLYKTFVHVVPAKPEGTFKLVDML</sequence>
<gene>
    <name type="primary">Mrpl27</name>
</gene>
<protein>
    <recommendedName>
        <fullName evidence="5">Large ribosomal subunit protein bL27m</fullName>
    </recommendedName>
    <alternativeName>
        <fullName>39S ribosomal protein L27, mitochondrial</fullName>
        <shortName>L27mt</shortName>
        <shortName>MRP-L27</shortName>
    </alternativeName>
</protein>
<comment type="subunit">
    <text evidence="2">Component of the mitochondrial ribosome large subunit (39S) which comprises a 16S rRNA and about 50 distinct proteins.</text>
</comment>
<comment type="subcellular location">
    <subcellularLocation>
        <location evidence="4">Mitochondrion</location>
    </subcellularLocation>
</comment>
<comment type="similarity">
    <text evidence="5">Belongs to the bacterial ribosomal protein bL27 family.</text>
</comment>
<reference key="1">
    <citation type="journal article" date="2001" name="J. Biol. Chem.">
        <title>Structural compensation for the deficit of rRNA with proteins in the mammalian mitochondrial ribosome. Systematic analysis of protein components of the large ribosomal subunit from mammalian mitochondria.</title>
        <authorList>
            <person name="Suzuki T."/>
            <person name="Terasaki M."/>
            <person name="Takemoto-Hori C."/>
            <person name="Hanada T."/>
            <person name="Ueda T."/>
            <person name="Wada A."/>
            <person name="Watanabe K."/>
        </authorList>
    </citation>
    <scope>NUCLEOTIDE SEQUENCE [MRNA]</scope>
    <scope>SUBCELLULAR LOCATION</scope>
</reference>
<reference key="2">
    <citation type="journal article" date="2004" name="Genome Res.">
        <title>The status, quality, and expansion of the NIH full-length cDNA project: the Mammalian Gene Collection (MGC).</title>
        <authorList>
            <consortium name="The MGC Project Team"/>
        </authorList>
    </citation>
    <scope>NUCLEOTIDE SEQUENCE [LARGE SCALE MRNA]</scope>
    <source>
        <tissue>Mammary gland</tissue>
    </source>
</reference>
<reference key="3">
    <citation type="journal article" date="2010" name="Cell">
        <title>A tissue-specific atlas of mouse protein phosphorylation and expression.</title>
        <authorList>
            <person name="Huttlin E.L."/>
            <person name="Jedrychowski M.P."/>
            <person name="Elias J.E."/>
            <person name="Goswami T."/>
            <person name="Rad R."/>
            <person name="Beausoleil S.A."/>
            <person name="Villen J."/>
            <person name="Haas W."/>
            <person name="Sowa M.E."/>
            <person name="Gygi S.P."/>
        </authorList>
    </citation>
    <scope>IDENTIFICATION BY MASS SPECTROMETRY [LARGE SCALE ANALYSIS]</scope>
    <source>
        <tissue>Brain</tissue>
        <tissue>Brown adipose tissue</tissue>
        <tissue>Heart</tissue>
        <tissue>Kidney</tissue>
        <tissue>Liver</tissue>
        <tissue>Spleen</tissue>
        <tissue>Testis</tissue>
    </source>
</reference>